<feature type="chain" id="PRO_0000196912" description="2,3,4,5-tetrahydropyridine-2,6-dicarboxylate N-succinyltransferase">
    <location>
        <begin position="1"/>
        <end position="273"/>
    </location>
</feature>
<feature type="binding site" evidence="1">
    <location>
        <position position="104"/>
    </location>
    <ligand>
        <name>substrate</name>
    </ligand>
</feature>
<feature type="binding site" evidence="1">
    <location>
        <position position="141"/>
    </location>
    <ligand>
        <name>substrate</name>
    </ligand>
</feature>
<keyword id="KW-0012">Acyltransferase</keyword>
<keyword id="KW-0028">Amino-acid biosynthesis</keyword>
<keyword id="KW-0963">Cytoplasm</keyword>
<keyword id="KW-0220">Diaminopimelate biosynthesis</keyword>
<keyword id="KW-0457">Lysine biosynthesis</keyword>
<keyword id="KW-1185">Reference proteome</keyword>
<keyword id="KW-0677">Repeat</keyword>
<keyword id="KW-0808">Transferase</keyword>
<reference key="1">
    <citation type="journal article" date="2005" name="Arch. Microbiol.">
        <title>The genome sequence of an anaerobic aromatic-degrading denitrifying bacterium, strain EbN1.</title>
        <authorList>
            <person name="Rabus R."/>
            <person name="Kube M."/>
            <person name="Heider J."/>
            <person name="Beck A."/>
            <person name="Heitmann K."/>
            <person name="Widdel F."/>
            <person name="Reinhardt R."/>
        </authorList>
    </citation>
    <scope>NUCLEOTIDE SEQUENCE [LARGE SCALE GENOMIC DNA]</scope>
    <source>
        <strain>DSM 19018 / LMG 30748 / EbN1</strain>
    </source>
</reference>
<dbReference type="EC" id="2.3.1.117" evidence="1"/>
<dbReference type="EMBL" id="CR555306">
    <property type="protein sequence ID" value="CAI09775.1"/>
    <property type="molecule type" value="Genomic_DNA"/>
</dbReference>
<dbReference type="RefSeq" id="WP_011239428.1">
    <property type="nucleotide sequence ID" value="NC_006513.1"/>
</dbReference>
<dbReference type="SMR" id="Q5NYT9"/>
<dbReference type="STRING" id="76114.ebA6386"/>
<dbReference type="KEGG" id="eba:ebA6386"/>
<dbReference type="eggNOG" id="COG2171">
    <property type="taxonomic scope" value="Bacteria"/>
</dbReference>
<dbReference type="HOGENOM" id="CLU_050859_0_1_4"/>
<dbReference type="OrthoDB" id="9775362at2"/>
<dbReference type="UniPathway" id="UPA00034">
    <property type="reaction ID" value="UER00019"/>
</dbReference>
<dbReference type="Proteomes" id="UP000006552">
    <property type="component" value="Chromosome"/>
</dbReference>
<dbReference type="GO" id="GO:0005737">
    <property type="term" value="C:cytoplasm"/>
    <property type="evidence" value="ECO:0007669"/>
    <property type="project" value="UniProtKB-SubCell"/>
</dbReference>
<dbReference type="GO" id="GO:0008666">
    <property type="term" value="F:2,3,4,5-tetrahydropyridine-2,6-dicarboxylate N-succinyltransferase activity"/>
    <property type="evidence" value="ECO:0007669"/>
    <property type="project" value="UniProtKB-UniRule"/>
</dbReference>
<dbReference type="GO" id="GO:0016779">
    <property type="term" value="F:nucleotidyltransferase activity"/>
    <property type="evidence" value="ECO:0007669"/>
    <property type="project" value="TreeGrafter"/>
</dbReference>
<dbReference type="GO" id="GO:0019877">
    <property type="term" value="P:diaminopimelate biosynthetic process"/>
    <property type="evidence" value="ECO:0007669"/>
    <property type="project" value="UniProtKB-UniRule"/>
</dbReference>
<dbReference type="GO" id="GO:0009089">
    <property type="term" value="P:lysine biosynthetic process via diaminopimelate"/>
    <property type="evidence" value="ECO:0007669"/>
    <property type="project" value="UniProtKB-UniRule"/>
</dbReference>
<dbReference type="CDD" id="cd03350">
    <property type="entry name" value="LbH_THP_succinylT"/>
    <property type="match status" value="1"/>
</dbReference>
<dbReference type="Gene3D" id="2.160.10.10">
    <property type="entry name" value="Hexapeptide repeat proteins"/>
    <property type="match status" value="1"/>
</dbReference>
<dbReference type="Gene3D" id="1.10.166.10">
    <property type="entry name" value="Tetrahydrodipicolinate-N-succinyltransferase, N-terminal domain"/>
    <property type="match status" value="1"/>
</dbReference>
<dbReference type="HAMAP" id="MF_00811">
    <property type="entry name" value="DapD"/>
    <property type="match status" value="1"/>
</dbReference>
<dbReference type="InterPro" id="IPR005664">
    <property type="entry name" value="DapD_Trfase_Hexpep_rpt_fam"/>
</dbReference>
<dbReference type="InterPro" id="IPR001451">
    <property type="entry name" value="Hexapep"/>
</dbReference>
<dbReference type="InterPro" id="IPR018357">
    <property type="entry name" value="Hexapep_transf_CS"/>
</dbReference>
<dbReference type="InterPro" id="IPR023180">
    <property type="entry name" value="THP_succinylTrfase_dom1"/>
</dbReference>
<dbReference type="InterPro" id="IPR037133">
    <property type="entry name" value="THP_succinylTrfase_N_sf"/>
</dbReference>
<dbReference type="InterPro" id="IPR011004">
    <property type="entry name" value="Trimer_LpxA-like_sf"/>
</dbReference>
<dbReference type="NCBIfam" id="TIGR00965">
    <property type="entry name" value="dapD"/>
    <property type="match status" value="1"/>
</dbReference>
<dbReference type="NCBIfam" id="NF008808">
    <property type="entry name" value="PRK11830.1"/>
    <property type="match status" value="1"/>
</dbReference>
<dbReference type="PANTHER" id="PTHR19136:SF52">
    <property type="entry name" value="2,3,4,5-TETRAHYDROPYRIDINE-2,6-DICARBOXYLATE N-SUCCINYLTRANSFERASE"/>
    <property type="match status" value="1"/>
</dbReference>
<dbReference type="PANTHER" id="PTHR19136">
    <property type="entry name" value="MOLYBDENUM COFACTOR GUANYLYLTRANSFERASE"/>
    <property type="match status" value="1"/>
</dbReference>
<dbReference type="Pfam" id="PF14602">
    <property type="entry name" value="Hexapep_2"/>
    <property type="match status" value="1"/>
</dbReference>
<dbReference type="Pfam" id="PF14805">
    <property type="entry name" value="THDPS_N_2"/>
    <property type="match status" value="1"/>
</dbReference>
<dbReference type="SUPFAM" id="SSF51161">
    <property type="entry name" value="Trimeric LpxA-like enzymes"/>
    <property type="match status" value="1"/>
</dbReference>
<dbReference type="PROSITE" id="PS00101">
    <property type="entry name" value="HEXAPEP_TRANSFERASES"/>
    <property type="match status" value="1"/>
</dbReference>
<accession>Q5NYT9</accession>
<name>DAPD_AROAE</name>
<comment type="catalytic activity">
    <reaction evidence="1">
        <text>(S)-2,3,4,5-tetrahydrodipicolinate + succinyl-CoA + H2O = (S)-2-succinylamino-6-oxoheptanedioate + CoA</text>
        <dbReference type="Rhea" id="RHEA:17325"/>
        <dbReference type="ChEBI" id="CHEBI:15377"/>
        <dbReference type="ChEBI" id="CHEBI:15685"/>
        <dbReference type="ChEBI" id="CHEBI:16845"/>
        <dbReference type="ChEBI" id="CHEBI:57287"/>
        <dbReference type="ChEBI" id="CHEBI:57292"/>
        <dbReference type="EC" id="2.3.1.117"/>
    </reaction>
</comment>
<comment type="pathway">
    <text evidence="1">Amino-acid biosynthesis; L-lysine biosynthesis via DAP pathway; LL-2,6-diaminopimelate from (S)-tetrahydrodipicolinate (succinylase route): step 1/3.</text>
</comment>
<comment type="subunit">
    <text evidence="1">Homotrimer.</text>
</comment>
<comment type="subcellular location">
    <subcellularLocation>
        <location evidence="1">Cytoplasm</location>
    </subcellularLocation>
</comment>
<comment type="similarity">
    <text evidence="1">Belongs to the transferase hexapeptide repeat family.</text>
</comment>
<proteinExistence type="inferred from homology"/>
<evidence type="ECO:0000255" key="1">
    <source>
        <dbReference type="HAMAP-Rule" id="MF_00811"/>
    </source>
</evidence>
<gene>
    <name evidence="1" type="primary">dapD</name>
    <name type="ordered locus">AZOSEA36500</name>
    <name type="ORF">ebA6386</name>
</gene>
<sequence>MQDLQKIIDDAFENRANLSPSAAPAAVRDAVASVIAGLDAGRLRVAEKIDGNWTVNQWIKKAVLISFRLADNEVMAGGTNQYFDKVPTKFGDYTPEQFREGGFRVVPPAVARRGSFIGRNVVLMPSYVNIGAYVDEGTMVDTWATVGSCAQIGKNVHLSGGVGIGGVLEPVQAGPVIIEDNVFVGARSEVVEGVIIEENAVLSMGVYIGQSTKIYDRATGEVTYGRVPSGAVVVPGSLPSADGKYSLYCAVIVKRVDAQTRAKTGINELLRGA</sequence>
<protein>
    <recommendedName>
        <fullName evidence="1">2,3,4,5-tetrahydropyridine-2,6-dicarboxylate N-succinyltransferase</fullName>
        <ecNumber evidence="1">2.3.1.117</ecNumber>
    </recommendedName>
    <alternativeName>
        <fullName evidence="1">Tetrahydrodipicolinate N-succinyltransferase</fullName>
        <shortName evidence="1">THDP succinyltransferase</shortName>
        <shortName evidence="1">THP succinyltransferase</shortName>
        <shortName evidence="1">Tetrahydropicolinate succinylase</shortName>
    </alternativeName>
</protein>
<organism>
    <name type="scientific">Aromatoleum aromaticum (strain DSM 19018 / LMG 30748 / EbN1)</name>
    <name type="common">Azoarcus sp. (strain EbN1)</name>
    <dbReference type="NCBI Taxonomy" id="76114"/>
    <lineage>
        <taxon>Bacteria</taxon>
        <taxon>Pseudomonadati</taxon>
        <taxon>Pseudomonadota</taxon>
        <taxon>Betaproteobacteria</taxon>
        <taxon>Rhodocyclales</taxon>
        <taxon>Rhodocyclaceae</taxon>
        <taxon>Aromatoleum</taxon>
    </lineage>
</organism>